<reference evidence="6 7" key="1">
    <citation type="journal article" date="2003" name="Gen. Comp. Endocrinol.">
        <title>C-type natriuretic peptide of rainbow trout (Oncorhynchus mykiss): primary structure and vasorelaxant activities.</title>
        <authorList>
            <person name="Inoue K."/>
            <person name="Russell M.J."/>
            <person name="Olson K.R."/>
            <person name="Takei Y."/>
        </authorList>
    </citation>
    <scope>NUCLEOTIDE SEQUENCE [MRNA]</scope>
    <scope>TISSUE SPECIFICITY</scope>
    <source>
        <tissue evidence="5">Brain</tissue>
    </source>
</reference>
<name>ANFC2_ONCMY</name>
<accession>Q8AXR2</accession>
<keyword id="KW-0165">Cleavage on pair of basic residues</keyword>
<keyword id="KW-1015">Disulfide bond</keyword>
<keyword id="KW-0372">Hormone</keyword>
<keyword id="KW-0964">Secreted</keyword>
<keyword id="KW-0732">Signal</keyword>
<keyword id="KW-0838">Vasoactive</keyword>
<dbReference type="EMBL" id="AB076602">
    <property type="protein sequence ID" value="BAC44843.1"/>
    <property type="molecule type" value="mRNA"/>
</dbReference>
<dbReference type="RefSeq" id="NP_001117682.1">
    <property type="nucleotide sequence ID" value="NM_001124210.1"/>
</dbReference>
<dbReference type="GeneID" id="100135814"/>
<dbReference type="KEGG" id="omy:100135814"/>
<dbReference type="CTD" id="100135814"/>
<dbReference type="OrthoDB" id="9387790at2759"/>
<dbReference type="Proteomes" id="UP000694395">
    <property type="component" value="Unplaced"/>
</dbReference>
<dbReference type="GO" id="GO:0005576">
    <property type="term" value="C:extracellular region"/>
    <property type="evidence" value="ECO:0007669"/>
    <property type="project" value="UniProtKB-SubCell"/>
</dbReference>
<dbReference type="GO" id="GO:0005179">
    <property type="term" value="F:hormone activity"/>
    <property type="evidence" value="ECO:0007669"/>
    <property type="project" value="UniProtKB-KW"/>
</dbReference>
<dbReference type="GO" id="GO:0097746">
    <property type="term" value="P:blood vessel diameter maintenance"/>
    <property type="evidence" value="ECO:0007669"/>
    <property type="project" value="UniProtKB-KW"/>
</dbReference>
<dbReference type="GO" id="GO:0006182">
    <property type="term" value="P:cGMP biosynthetic process"/>
    <property type="evidence" value="ECO:0007669"/>
    <property type="project" value="TreeGrafter"/>
</dbReference>
<dbReference type="GO" id="GO:0007168">
    <property type="term" value="P:receptor guanylyl cyclase signaling pathway"/>
    <property type="evidence" value="ECO:0007669"/>
    <property type="project" value="TreeGrafter"/>
</dbReference>
<dbReference type="InterPro" id="IPR002406">
    <property type="entry name" value="C_natriurtcpep"/>
</dbReference>
<dbReference type="InterPro" id="IPR000663">
    <property type="entry name" value="Natr_peptide"/>
</dbReference>
<dbReference type="InterPro" id="IPR030480">
    <property type="entry name" value="Natr_peptide_CS"/>
</dbReference>
<dbReference type="PANTHER" id="PTHR12167">
    <property type="entry name" value="C-TYPE NATRIURETIC PEPTIDE"/>
    <property type="match status" value="1"/>
</dbReference>
<dbReference type="PANTHER" id="PTHR12167:SF4">
    <property type="entry name" value="NATRIURETIC PEPTIDE C-LIKE PROTEIN"/>
    <property type="match status" value="1"/>
</dbReference>
<dbReference type="Pfam" id="PF00212">
    <property type="entry name" value="ANP"/>
    <property type="match status" value="1"/>
</dbReference>
<dbReference type="PRINTS" id="PR00713">
    <property type="entry name" value="CNATPEPTIDE"/>
</dbReference>
<dbReference type="PRINTS" id="PR00710">
    <property type="entry name" value="NATPEPTIDES"/>
</dbReference>
<dbReference type="SMART" id="SM00183">
    <property type="entry name" value="NAT_PEP"/>
    <property type="match status" value="1"/>
</dbReference>
<dbReference type="PROSITE" id="PS00263">
    <property type="entry name" value="NATRIURETIC_PEPTIDE"/>
    <property type="match status" value="1"/>
</dbReference>
<sequence>MLYPALLCAALLLIAPLGHTEGRTLYPSPDAIQFVEQFLDRYNDLTLDDLENLVSSQPEEPSSAFTSGVKIAEYPKWADIPAQGDSTWLRLLKGTLANQKRAVTDRSRRGWNRGCFGLKLDRIGSMSGLGC</sequence>
<feature type="signal peptide" evidence="3">
    <location>
        <begin position="1"/>
        <end position="22"/>
    </location>
</feature>
<feature type="propeptide" id="PRO_0000001591" evidence="1">
    <location>
        <begin position="23"/>
        <end position="109"/>
    </location>
</feature>
<feature type="peptide" id="PRO_0000001592" description="C-type natriuretic peptide 2">
    <location>
        <begin position="110"/>
        <end position="131"/>
    </location>
</feature>
<feature type="disulfide bond" evidence="2">
    <location>
        <begin position="115"/>
        <end position="131"/>
    </location>
</feature>
<protein>
    <recommendedName>
        <fullName>C-type natriuretic peptide 2</fullName>
    </recommendedName>
    <alternativeName>
        <fullName>C-type natriuretic peptide II</fullName>
    </alternativeName>
    <alternativeName>
        <fullName>CNP-22 II</fullName>
    </alternativeName>
</protein>
<evidence type="ECO:0000250" key="1"/>
<evidence type="ECO:0000250" key="2">
    <source>
        <dbReference type="UniProtKB" id="P18145"/>
    </source>
</evidence>
<evidence type="ECO:0000255" key="3"/>
<evidence type="ECO:0000255" key="4">
    <source>
        <dbReference type="RuleBase" id="RU003686"/>
    </source>
</evidence>
<evidence type="ECO:0000269" key="5">
    <source>
    </source>
</evidence>
<evidence type="ECO:0000305" key="6"/>
<evidence type="ECO:0000312" key="7">
    <source>
        <dbReference type="EMBL" id="BAC44843.1"/>
    </source>
</evidence>
<proteinExistence type="evidence at transcript level"/>
<organism>
    <name type="scientific">Oncorhynchus mykiss</name>
    <name type="common">Rainbow trout</name>
    <name type="synonym">Salmo gairdneri</name>
    <dbReference type="NCBI Taxonomy" id="8022"/>
    <lineage>
        <taxon>Eukaryota</taxon>
        <taxon>Metazoa</taxon>
        <taxon>Chordata</taxon>
        <taxon>Craniata</taxon>
        <taxon>Vertebrata</taxon>
        <taxon>Euteleostomi</taxon>
        <taxon>Actinopterygii</taxon>
        <taxon>Neopterygii</taxon>
        <taxon>Teleostei</taxon>
        <taxon>Protacanthopterygii</taxon>
        <taxon>Salmoniformes</taxon>
        <taxon>Salmonidae</taxon>
        <taxon>Salmoninae</taxon>
        <taxon>Oncorhynchus</taxon>
    </lineage>
</organism>
<comment type="function">
    <text evidence="2">Exhibits natriuretic and vasodepressor activity. Has a cGMP-stimulating activity (By similarity).</text>
</comment>
<comment type="subcellular location">
    <subcellularLocation>
        <location>Secreted</location>
    </subcellularLocation>
</comment>
<comment type="tissue specificity">
    <text evidence="5">Expressed in brain and to a low extent in atrium.</text>
</comment>
<comment type="similarity">
    <text evidence="4">Belongs to the natriuretic peptide family.</text>
</comment>
<gene>
    <name evidence="7" type="primary">cnp-1-2</name>
</gene>